<gene>
    <name evidence="1" type="primary">hemH</name>
    <name type="ordered locus">CPn_0603</name>
    <name type="ordered locus">CP_0144</name>
    <name type="ordered locus">CpB0627</name>
</gene>
<accession>Q9Z7V1</accession>
<accession>Q9JSD1</accession>
<keyword id="KW-0963">Cytoplasm</keyword>
<keyword id="KW-0350">Heme biosynthesis</keyword>
<keyword id="KW-0408">Iron</keyword>
<keyword id="KW-0456">Lyase</keyword>
<keyword id="KW-0479">Metal-binding</keyword>
<keyword id="KW-0627">Porphyrin biosynthesis</keyword>
<name>HEMH_CHLPN</name>
<feature type="chain" id="PRO_0000175129" description="Ferrochelatase">
    <location>
        <begin position="1"/>
        <end position="327"/>
    </location>
</feature>
<feature type="binding site" evidence="1">
    <location>
        <position position="187"/>
    </location>
    <ligand>
        <name>Fe cation</name>
        <dbReference type="ChEBI" id="CHEBI:24875"/>
    </ligand>
</feature>
<feature type="binding site" evidence="1">
    <location>
        <position position="265"/>
    </location>
    <ligand>
        <name>Fe cation</name>
        <dbReference type="ChEBI" id="CHEBI:24875"/>
    </ligand>
</feature>
<feature type="sequence conflict" description="In Ref. 3; BAA98810." evidence="2" ref="3">
    <original>V</original>
    <variation>A</variation>
    <location>
        <position position="254"/>
    </location>
</feature>
<organism>
    <name type="scientific">Chlamydia pneumoniae</name>
    <name type="common">Chlamydophila pneumoniae</name>
    <dbReference type="NCBI Taxonomy" id="83558"/>
    <lineage>
        <taxon>Bacteria</taxon>
        <taxon>Pseudomonadati</taxon>
        <taxon>Chlamydiota</taxon>
        <taxon>Chlamydiia</taxon>
        <taxon>Chlamydiales</taxon>
        <taxon>Chlamydiaceae</taxon>
        <taxon>Chlamydia/Chlamydophila group</taxon>
        <taxon>Chlamydia</taxon>
    </lineage>
</organism>
<reference key="1">
    <citation type="journal article" date="1999" name="Nat. Genet.">
        <title>Comparative genomes of Chlamydia pneumoniae and C. trachomatis.</title>
        <authorList>
            <person name="Kalman S."/>
            <person name="Mitchell W.P."/>
            <person name="Marathe R."/>
            <person name="Lammel C.J."/>
            <person name="Fan J."/>
            <person name="Hyman R.W."/>
            <person name="Olinger L."/>
            <person name="Grimwood J."/>
            <person name="Davis R.W."/>
            <person name="Stephens R.S."/>
        </authorList>
    </citation>
    <scope>NUCLEOTIDE SEQUENCE [LARGE SCALE GENOMIC DNA]</scope>
    <source>
        <strain>CWL029</strain>
    </source>
</reference>
<reference key="2">
    <citation type="journal article" date="2000" name="Nucleic Acids Res.">
        <title>Genome sequences of Chlamydia trachomatis MoPn and Chlamydia pneumoniae AR39.</title>
        <authorList>
            <person name="Read T.D."/>
            <person name="Brunham R.C."/>
            <person name="Shen C."/>
            <person name="Gill S.R."/>
            <person name="Heidelberg J.F."/>
            <person name="White O."/>
            <person name="Hickey E.K."/>
            <person name="Peterson J.D."/>
            <person name="Utterback T.R."/>
            <person name="Berry K.J."/>
            <person name="Bass S."/>
            <person name="Linher K.D."/>
            <person name="Weidman J.F."/>
            <person name="Khouri H.M."/>
            <person name="Craven B."/>
            <person name="Bowman C."/>
            <person name="Dodson R.J."/>
            <person name="Gwinn M.L."/>
            <person name="Nelson W.C."/>
            <person name="DeBoy R.T."/>
            <person name="Kolonay J.F."/>
            <person name="McClarty G."/>
            <person name="Salzberg S.L."/>
            <person name="Eisen J.A."/>
            <person name="Fraser C.M."/>
        </authorList>
    </citation>
    <scope>NUCLEOTIDE SEQUENCE [LARGE SCALE GENOMIC DNA]</scope>
    <source>
        <strain>AR39</strain>
    </source>
</reference>
<reference key="3">
    <citation type="journal article" date="2000" name="Nucleic Acids Res.">
        <title>Comparison of whole genome sequences of Chlamydia pneumoniae J138 from Japan and CWL029 from USA.</title>
        <authorList>
            <person name="Shirai M."/>
            <person name="Hirakawa H."/>
            <person name="Kimoto M."/>
            <person name="Tabuchi M."/>
            <person name="Kishi F."/>
            <person name="Ouchi K."/>
            <person name="Shiba T."/>
            <person name="Ishii K."/>
            <person name="Hattori M."/>
            <person name="Kuhara S."/>
            <person name="Nakazawa T."/>
        </authorList>
    </citation>
    <scope>NUCLEOTIDE SEQUENCE [LARGE SCALE GENOMIC DNA]</scope>
    <source>
        <strain>J138</strain>
    </source>
</reference>
<reference key="4">
    <citation type="submission" date="2002-05" db="EMBL/GenBank/DDBJ databases">
        <title>The genome sequence of Chlamydia pneumoniae TW183 and comparison with other Chlamydia strains based on whole genome sequence analysis.</title>
        <authorList>
            <person name="Geng M.M."/>
            <person name="Schuhmacher A."/>
            <person name="Muehldorfer I."/>
            <person name="Bensch K.W."/>
            <person name="Schaefer K.P."/>
            <person name="Schneider S."/>
            <person name="Pohl T."/>
            <person name="Essig A."/>
            <person name="Marre R."/>
            <person name="Melchers K."/>
        </authorList>
    </citation>
    <scope>NUCLEOTIDE SEQUENCE [LARGE SCALE GENOMIC DNA]</scope>
    <source>
        <strain>TW-183</strain>
    </source>
</reference>
<dbReference type="EC" id="4.98.1.1" evidence="1"/>
<dbReference type="EMBL" id="AE001363">
    <property type="protein sequence ID" value="AAD18742.1"/>
    <property type="molecule type" value="Genomic_DNA"/>
</dbReference>
<dbReference type="EMBL" id="AE002161">
    <property type="protein sequence ID" value="AAF38026.1"/>
    <property type="molecule type" value="Genomic_DNA"/>
</dbReference>
<dbReference type="EMBL" id="BA000008">
    <property type="protein sequence ID" value="BAA98810.1"/>
    <property type="molecule type" value="Genomic_DNA"/>
</dbReference>
<dbReference type="EMBL" id="AE009440">
    <property type="protein sequence ID" value="AAP98556.1"/>
    <property type="status" value="ALT_INIT"/>
    <property type="molecule type" value="Genomic_DNA"/>
</dbReference>
<dbReference type="PIR" id="E72057">
    <property type="entry name" value="E72057"/>
</dbReference>
<dbReference type="PIR" id="H86565">
    <property type="entry name" value="H86565"/>
</dbReference>
<dbReference type="RefSeq" id="NP_224799.1">
    <property type="nucleotide sequence ID" value="NC_000922.1"/>
</dbReference>
<dbReference type="RefSeq" id="WP_010883241.1">
    <property type="nucleotide sequence ID" value="NZ_LN847257.1"/>
</dbReference>
<dbReference type="SMR" id="Q9Z7V1"/>
<dbReference type="STRING" id="406984.CPK_ORF00002"/>
<dbReference type="GeneID" id="45050651"/>
<dbReference type="KEGG" id="cpa:CP_0144"/>
<dbReference type="KEGG" id="cpj:hemZ"/>
<dbReference type="KEGG" id="cpn:CPn_0603"/>
<dbReference type="KEGG" id="cpt:CpB0627"/>
<dbReference type="PATRIC" id="fig|115713.3.peg.672"/>
<dbReference type="eggNOG" id="COG0276">
    <property type="taxonomic scope" value="Bacteria"/>
</dbReference>
<dbReference type="HOGENOM" id="CLU_018884_4_1_0"/>
<dbReference type="OMA" id="WLEPDIC"/>
<dbReference type="OrthoDB" id="9809741at2"/>
<dbReference type="UniPathway" id="UPA00252">
    <property type="reaction ID" value="UER00325"/>
</dbReference>
<dbReference type="Proteomes" id="UP000000583">
    <property type="component" value="Chromosome"/>
</dbReference>
<dbReference type="Proteomes" id="UP000000801">
    <property type="component" value="Chromosome"/>
</dbReference>
<dbReference type="GO" id="GO:0005737">
    <property type="term" value="C:cytoplasm"/>
    <property type="evidence" value="ECO:0007669"/>
    <property type="project" value="UniProtKB-SubCell"/>
</dbReference>
<dbReference type="GO" id="GO:0004325">
    <property type="term" value="F:ferrochelatase activity"/>
    <property type="evidence" value="ECO:0007669"/>
    <property type="project" value="UniProtKB-UniRule"/>
</dbReference>
<dbReference type="GO" id="GO:0046872">
    <property type="term" value="F:metal ion binding"/>
    <property type="evidence" value="ECO:0007669"/>
    <property type="project" value="UniProtKB-KW"/>
</dbReference>
<dbReference type="GO" id="GO:0006783">
    <property type="term" value="P:heme biosynthetic process"/>
    <property type="evidence" value="ECO:0007669"/>
    <property type="project" value="UniProtKB-UniRule"/>
</dbReference>
<dbReference type="CDD" id="cd00419">
    <property type="entry name" value="Ferrochelatase_C"/>
    <property type="match status" value="1"/>
</dbReference>
<dbReference type="CDD" id="cd03411">
    <property type="entry name" value="Ferrochelatase_N"/>
    <property type="match status" value="1"/>
</dbReference>
<dbReference type="Gene3D" id="3.40.50.1400">
    <property type="match status" value="2"/>
</dbReference>
<dbReference type="HAMAP" id="MF_00323">
    <property type="entry name" value="Ferrochelatase"/>
    <property type="match status" value="1"/>
</dbReference>
<dbReference type="InterPro" id="IPR001015">
    <property type="entry name" value="Ferrochelatase"/>
</dbReference>
<dbReference type="InterPro" id="IPR019772">
    <property type="entry name" value="Ferrochelatase_AS"/>
</dbReference>
<dbReference type="InterPro" id="IPR033644">
    <property type="entry name" value="Ferrochelatase_C"/>
</dbReference>
<dbReference type="InterPro" id="IPR033659">
    <property type="entry name" value="Ferrochelatase_N"/>
</dbReference>
<dbReference type="NCBIfam" id="TIGR00109">
    <property type="entry name" value="hemH"/>
    <property type="match status" value="1"/>
</dbReference>
<dbReference type="PANTHER" id="PTHR11108">
    <property type="entry name" value="FERROCHELATASE"/>
    <property type="match status" value="1"/>
</dbReference>
<dbReference type="PANTHER" id="PTHR11108:SF1">
    <property type="entry name" value="FERROCHELATASE, MITOCHONDRIAL"/>
    <property type="match status" value="1"/>
</dbReference>
<dbReference type="Pfam" id="PF00762">
    <property type="entry name" value="Ferrochelatase"/>
    <property type="match status" value="1"/>
</dbReference>
<dbReference type="SUPFAM" id="SSF53800">
    <property type="entry name" value="Chelatase"/>
    <property type="match status" value="1"/>
</dbReference>
<dbReference type="PROSITE" id="PS00534">
    <property type="entry name" value="FERROCHELATASE"/>
    <property type="match status" value="1"/>
</dbReference>
<proteinExistence type="inferred from homology"/>
<evidence type="ECO:0000255" key="1">
    <source>
        <dbReference type="HAMAP-Rule" id="MF_00323"/>
    </source>
</evidence>
<evidence type="ECO:0000305" key="2"/>
<sequence length="327" mass="37503">MTTPAYLLANFGGPRHAKDLQEFLISLLTDRDVTGTFLPRVLHRHLFTFIAKKRVPKVLPQYQSLQNWSPIYFDTETLAKTLSEILRAPVIPFHRYLPSTHEKTLLALRTLHTRHVIGIPLFPHFTYSVTGSIVRFFMKHVPEIPISWIPQFGSDSKFVSLITCHIRDFLQKLGILEKECCFLFSVHGLPVRYISQGDPYSKQCYESFSAITTNFKQSENFLCFQSKFGPGKWLSPSTAQLCQNIDTDKPNVIVVPFGFISDHLETLYEIERDYLPLLRSRGYRALRIPAIYSSPLWVSTLVDIVKENSTVVAEELIKSGKKHTGIR</sequence>
<protein>
    <recommendedName>
        <fullName evidence="1">Ferrochelatase</fullName>
        <ecNumber evidence="1">4.98.1.1</ecNumber>
    </recommendedName>
    <alternativeName>
        <fullName evidence="1">Heme synthase</fullName>
    </alternativeName>
    <alternativeName>
        <fullName evidence="1">Protoheme ferro-lyase</fullName>
    </alternativeName>
</protein>
<comment type="function">
    <text evidence="1">Catalyzes the ferrous insertion into protoporphyrin IX.</text>
</comment>
<comment type="catalytic activity">
    <reaction evidence="1">
        <text>heme b + 2 H(+) = protoporphyrin IX + Fe(2+)</text>
        <dbReference type="Rhea" id="RHEA:22584"/>
        <dbReference type="ChEBI" id="CHEBI:15378"/>
        <dbReference type="ChEBI" id="CHEBI:29033"/>
        <dbReference type="ChEBI" id="CHEBI:57306"/>
        <dbReference type="ChEBI" id="CHEBI:60344"/>
        <dbReference type="EC" id="4.98.1.1"/>
    </reaction>
</comment>
<comment type="pathway">
    <text evidence="1">Porphyrin-containing compound metabolism; protoheme biosynthesis; protoheme from protoporphyrin-IX: step 1/1.</text>
</comment>
<comment type="subcellular location">
    <subcellularLocation>
        <location evidence="1">Cytoplasm</location>
    </subcellularLocation>
</comment>
<comment type="similarity">
    <text evidence="1 2">Belongs to the ferrochelatase family.</text>
</comment>
<comment type="sequence caution" evidence="2">
    <conflict type="erroneous initiation">
        <sequence resource="EMBL-CDS" id="AAP98556"/>
    </conflict>
</comment>